<sequence length="141" mass="15941">MLSPKRTKYRKPHRGNRKGQALRGNKISFGDFALQALEPGWITSRQIEAGRRAMSRYAKRGGKLWIRMFPDRSITARAAETRMGAGKGAPDYWVCIVKPGKILYELAGVPETIARASMRIAAYKMPVKTKFLVRDEYVAPQ</sequence>
<protein>
    <recommendedName>
        <fullName evidence="1">Large ribosomal subunit protein uL16c</fullName>
    </recommendedName>
    <alternativeName>
        <fullName evidence="3">50S ribosomal protein L16, chloroplastic</fullName>
    </alternativeName>
</protein>
<organism>
    <name type="scientific">Ostreococcus tauri</name>
    <dbReference type="NCBI Taxonomy" id="70448"/>
    <lineage>
        <taxon>Eukaryota</taxon>
        <taxon>Viridiplantae</taxon>
        <taxon>Chlorophyta</taxon>
        <taxon>Mamiellophyceae</taxon>
        <taxon>Mamiellales</taxon>
        <taxon>Bathycoccaceae</taxon>
        <taxon>Ostreococcus</taxon>
    </lineage>
</organism>
<keyword id="KW-0150">Chloroplast</keyword>
<keyword id="KW-0934">Plastid</keyword>
<keyword id="KW-1185">Reference proteome</keyword>
<keyword id="KW-0687">Ribonucleoprotein</keyword>
<keyword id="KW-0689">Ribosomal protein</keyword>
<comment type="subunit">
    <text evidence="1">Part of the 50S ribosomal subunit.</text>
</comment>
<comment type="subcellular location">
    <subcellularLocation>
        <location>Plastid</location>
        <location>Chloroplast</location>
    </subcellularLocation>
</comment>
<comment type="similarity">
    <text evidence="1">Belongs to the universal ribosomal protein uL16 family.</text>
</comment>
<evidence type="ECO:0000255" key="1">
    <source>
        <dbReference type="HAMAP-Rule" id="MF_01342"/>
    </source>
</evidence>
<evidence type="ECO:0000256" key="2">
    <source>
        <dbReference type="SAM" id="MobiDB-lite"/>
    </source>
</evidence>
<evidence type="ECO:0000305" key="3"/>
<reference key="1">
    <citation type="journal article" date="2007" name="Mol. Biol. Evol.">
        <title>The complete chloroplast and mitochondrial DNA sequence of Ostreococcus tauri: organelle genomes of the smallest eukaryote are examples of compaction.</title>
        <authorList>
            <person name="Robbens S."/>
            <person name="Derelle E."/>
            <person name="Ferraz C."/>
            <person name="Wuyts J."/>
            <person name="Moreau H."/>
            <person name="Van de Peer Y."/>
        </authorList>
    </citation>
    <scope>NUCLEOTIDE SEQUENCE [LARGE SCALE GENOMIC DNA]</scope>
    <source>
        <strain>OTTH0595</strain>
    </source>
</reference>
<accession>Q0P3L6</accession>
<geneLocation type="chloroplast"/>
<feature type="chain" id="PRO_0000251696" description="Large ribosomal subunit protein uL16c">
    <location>
        <begin position="1"/>
        <end position="141"/>
    </location>
</feature>
<feature type="region of interest" description="Disordered" evidence="2">
    <location>
        <begin position="1"/>
        <end position="21"/>
    </location>
</feature>
<feature type="compositionally biased region" description="Basic residues" evidence="2">
    <location>
        <begin position="1"/>
        <end position="17"/>
    </location>
</feature>
<dbReference type="EMBL" id="CR954199">
    <property type="protein sequence ID" value="CAL36361.1"/>
    <property type="molecule type" value="Genomic_DNA"/>
</dbReference>
<dbReference type="RefSeq" id="YP_717239.1">
    <property type="nucleotide sequence ID" value="NC_008289.1"/>
</dbReference>
<dbReference type="SMR" id="Q0P3L6"/>
<dbReference type="FunCoup" id="Q0P3L6">
    <property type="interactions" value="646"/>
</dbReference>
<dbReference type="STRING" id="70448.Q0P3L6"/>
<dbReference type="GeneID" id="4238790"/>
<dbReference type="KEGG" id="ota:OstapCp36"/>
<dbReference type="eggNOG" id="KOG3422">
    <property type="taxonomic scope" value="Eukaryota"/>
</dbReference>
<dbReference type="InParanoid" id="Q0P3L6"/>
<dbReference type="Proteomes" id="UP000009170">
    <property type="component" value="Chloroplast"/>
</dbReference>
<dbReference type="GO" id="GO:0009507">
    <property type="term" value="C:chloroplast"/>
    <property type="evidence" value="ECO:0007669"/>
    <property type="project" value="UniProtKB-SubCell"/>
</dbReference>
<dbReference type="GO" id="GO:0005762">
    <property type="term" value="C:mitochondrial large ribosomal subunit"/>
    <property type="evidence" value="ECO:0007669"/>
    <property type="project" value="TreeGrafter"/>
</dbReference>
<dbReference type="GO" id="GO:0019843">
    <property type="term" value="F:rRNA binding"/>
    <property type="evidence" value="ECO:0007669"/>
    <property type="project" value="InterPro"/>
</dbReference>
<dbReference type="GO" id="GO:0003735">
    <property type="term" value="F:structural constituent of ribosome"/>
    <property type="evidence" value="ECO:0007669"/>
    <property type="project" value="InterPro"/>
</dbReference>
<dbReference type="GO" id="GO:0032543">
    <property type="term" value="P:mitochondrial translation"/>
    <property type="evidence" value="ECO:0007669"/>
    <property type="project" value="TreeGrafter"/>
</dbReference>
<dbReference type="CDD" id="cd01433">
    <property type="entry name" value="Ribosomal_L16_L10e"/>
    <property type="match status" value="1"/>
</dbReference>
<dbReference type="FunFam" id="3.90.1170.10:FF:000001">
    <property type="entry name" value="50S ribosomal protein L16"/>
    <property type="match status" value="1"/>
</dbReference>
<dbReference type="Gene3D" id="3.90.1170.10">
    <property type="entry name" value="Ribosomal protein L10e/L16"/>
    <property type="match status" value="1"/>
</dbReference>
<dbReference type="HAMAP" id="MF_01342">
    <property type="entry name" value="Ribosomal_uL16"/>
    <property type="match status" value="1"/>
</dbReference>
<dbReference type="InterPro" id="IPR047873">
    <property type="entry name" value="Ribosomal_uL16"/>
</dbReference>
<dbReference type="InterPro" id="IPR000114">
    <property type="entry name" value="Ribosomal_uL16_bact-type"/>
</dbReference>
<dbReference type="InterPro" id="IPR020798">
    <property type="entry name" value="Ribosomal_uL16_CS"/>
</dbReference>
<dbReference type="InterPro" id="IPR016180">
    <property type="entry name" value="Ribosomal_uL16_dom"/>
</dbReference>
<dbReference type="InterPro" id="IPR036920">
    <property type="entry name" value="Ribosomal_uL16_sf"/>
</dbReference>
<dbReference type="NCBIfam" id="TIGR01164">
    <property type="entry name" value="rplP_bact"/>
    <property type="match status" value="1"/>
</dbReference>
<dbReference type="PANTHER" id="PTHR12220">
    <property type="entry name" value="50S/60S RIBOSOMAL PROTEIN L16"/>
    <property type="match status" value="1"/>
</dbReference>
<dbReference type="PANTHER" id="PTHR12220:SF13">
    <property type="entry name" value="LARGE RIBOSOMAL SUBUNIT PROTEIN UL16M"/>
    <property type="match status" value="1"/>
</dbReference>
<dbReference type="Pfam" id="PF00252">
    <property type="entry name" value="Ribosomal_L16"/>
    <property type="match status" value="1"/>
</dbReference>
<dbReference type="PRINTS" id="PR00060">
    <property type="entry name" value="RIBOSOMALL16"/>
</dbReference>
<dbReference type="SUPFAM" id="SSF54686">
    <property type="entry name" value="Ribosomal protein L16p/L10e"/>
    <property type="match status" value="1"/>
</dbReference>
<dbReference type="PROSITE" id="PS00586">
    <property type="entry name" value="RIBOSOMAL_L16_1"/>
    <property type="match status" value="1"/>
</dbReference>
<dbReference type="PROSITE" id="PS00701">
    <property type="entry name" value="RIBOSOMAL_L16_2"/>
    <property type="match status" value="1"/>
</dbReference>
<proteinExistence type="inferred from homology"/>
<gene>
    <name evidence="1" type="primary">rpl16</name>
    <name type="ordered locus">OtCpg00360</name>
</gene>
<name>RK16_OSTTA</name>